<sequence length="24" mass="2475">AQTPVKVTVTGAAGQIGYALLFRI</sequence>
<reference key="1">
    <citation type="journal article" date="1989" name="Biol. Chem. Hoppe-Seyler">
        <title>Purification and N-terminal amino-acid sequences of bacterial malate dehydrogenases from six actinomycetales strains and from Phenylobacterium immobile, strain E.</title>
        <authorList>
            <person name="Rommel T.O."/>
            <person name="Hund H.-K."/>
            <person name="Speth A.R."/>
            <person name="Lingens F."/>
        </authorList>
    </citation>
    <scope>PROTEIN SEQUENCE</scope>
</reference>
<organism>
    <name type="scientific">Streptosporangium roseum</name>
    <dbReference type="NCBI Taxonomy" id="2001"/>
    <lineage>
        <taxon>Bacteria</taxon>
        <taxon>Bacillati</taxon>
        <taxon>Actinomycetota</taxon>
        <taxon>Actinomycetes</taxon>
        <taxon>Streptosporangiales</taxon>
        <taxon>Streptosporangiaceae</taxon>
        <taxon>Streptosporangium</taxon>
    </lineage>
</organism>
<gene>
    <name type="primary">mdh</name>
</gene>
<feature type="chain" id="PRO_0000113395" description="Malate dehydrogenase">
    <location>
        <begin position="1"/>
        <end position="24" status="greater than"/>
    </location>
</feature>
<feature type="binding site" evidence="1">
    <location>
        <begin position="11"/>
        <end position="17"/>
    </location>
    <ligand>
        <name>NAD(+)</name>
        <dbReference type="ChEBI" id="CHEBI:57540"/>
    </ligand>
</feature>
<feature type="non-terminal residue">
    <location>
        <position position="24"/>
    </location>
</feature>
<protein>
    <recommendedName>
        <fullName>Malate dehydrogenase</fullName>
        <ecNumber>1.1.1.37</ecNumber>
    </recommendedName>
</protein>
<dbReference type="EC" id="1.1.1.37"/>
<dbReference type="PIR" id="S04956">
    <property type="entry name" value="S04956"/>
</dbReference>
<dbReference type="GO" id="GO:0030060">
    <property type="term" value="F:L-malate dehydrogenase (NAD+) activity"/>
    <property type="evidence" value="ECO:0007669"/>
    <property type="project" value="UniProtKB-EC"/>
</dbReference>
<dbReference type="GO" id="GO:0006099">
    <property type="term" value="P:tricarboxylic acid cycle"/>
    <property type="evidence" value="ECO:0007669"/>
    <property type="project" value="UniProtKB-KW"/>
</dbReference>
<dbReference type="Gene3D" id="3.40.50.720">
    <property type="entry name" value="NAD(P)-binding Rossmann-like Domain"/>
    <property type="match status" value="1"/>
</dbReference>
<dbReference type="InterPro" id="IPR036291">
    <property type="entry name" value="NAD(P)-bd_dom_sf"/>
</dbReference>
<dbReference type="SUPFAM" id="SSF51735">
    <property type="entry name" value="NAD(P)-binding Rossmann-fold domains"/>
    <property type="match status" value="1"/>
</dbReference>
<comment type="function">
    <text evidence="1">Catalyzes the reversible oxidation of malate to oxaloacetate.</text>
</comment>
<comment type="catalytic activity">
    <reaction evidence="2">
        <text>(S)-malate + NAD(+) = oxaloacetate + NADH + H(+)</text>
        <dbReference type="Rhea" id="RHEA:21432"/>
        <dbReference type="ChEBI" id="CHEBI:15378"/>
        <dbReference type="ChEBI" id="CHEBI:15589"/>
        <dbReference type="ChEBI" id="CHEBI:16452"/>
        <dbReference type="ChEBI" id="CHEBI:57540"/>
        <dbReference type="ChEBI" id="CHEBI:57945"/>
        <dbReference type="EC" id="1.1.1.37"/>
    </reaction>
</comment>
<comment type="similarity">
    <text evidence="3">Belongs to the LDH/MDH superfamily. MDH type 2 family.</text>
</comment>
<proteinExistence type="evidence at protein level"/>
<accession>P19983</accession>
<keyword id="KW-0903">Direct protein sequencing</keyword>
<keyword id="KW-0520">NAD</keyword>
<keyword id="KW-0560">Oxidoreductase</keyword>
<keyword id="KW-0816">Tricarboxylic acid cycle</keyword>
<evidence type="ECO:0000250" key="1"/>
<evidence type="ECO:0000255" key="2">
    <source>
        <dbReference type="PROSITE-ProRule" id="PRU10004"/>
    </source>
</evidence>
<evidence type="ECO:0000305" key="3"/>
<name>MDH_STRRS</name>